<name>AQP4_BOVIN</name>
<keyword id="KW-0025">Alternative splicing</keyword>
<keyword id="KW-1003">Cell membrane</keyword>
<keyword id="KW-0966">Cell projection</keyword>
<keyword id="KW-0967">Endosome</keyword>
<keyword id="KW-0325">Glycoprotein</keyword>
<keyword id="KW-0449">Lipoprotein</keyword>
<keyword id="KW-0472">Membrane</keyword>
<keyword id="KW-0564">Palmitate</keyword>
<keyword id="KW-0597">Phosphoprotein</keyword>
<keyword id="KW-1185">Reference proteome</keyword>
<keyword id="KW-0677">Repeat</keyword>
<keyword id="KW-0812">Transmembrane</keyword>
<keyword id="KW-1133">Transmembrane helix</keyword>
<keyword id="KW-0813">Transport</keyword>
<comment type="function">
    <text evidence="4">Forms a water-specific channel. Plays an important role in brain water homeostasis and in glymphatic solute transport. Required for a normal rate of water exchange across the blood brain interface. Required for normal levels of cerebrospinal fluid influx into the brain cortex and parenchyma along paravascular spaces that surround penetrating arteries, and for normal drainage of interstitial fluid along paravenous drainage pathways. Thereby, it is required for normal clearance of solutes from the brain interstitial fluid, including soluble beta-amyloid peptides derived from APP. Plays a redundant role in urinary water homeostasis and urinary concentrating ability.</text>
</comment>
<comment type="catalytic activity">
    <reaction evidence="3">
        <text>H2O(in) = H2O(out)</text>
        <dbReference type="Rhea" id="RHEA:29667"/>
        <dbReference type="ChEBI" id="CHEBI:15377"/>
    </reaction>
</comment>
<comment type="subunit">
    <text evidence="2 3">Homotetramer. The tetramers can form oligomeric arrays in membranes. The size of the oligomers differs between tissues and is smaller in skeletal muscle than in brain. Interaction between AQP4 oligomeric arrays in close-by cells can contribute to cell-cell adhesion (By similarity). Part of a complex containing MLC1, TRPV4, HEPACAM and ATP1B1 (By similarity).</text>
</comment>
<comment type="subcellular location">
    <subcellularLocation>
        <location evidence="4">Cell membrane</location>
        <topology evidence="3">Multi-pass membrane protein</topology>
    </subcellularLocation>
    <subcellularLocation>
        <location evidence="4">Basolateral cell membrane</location>
        <topology evidence="3">Multi-pass membrane protein</topology>
    </subcellularLocation>
    <subcellularLocation>
        <location evidence="2">Endosome membrane</location>
    </subcellularLocation>
    <subcellularLocation>
        <location evidence="4">Cell membrane</location>
        <location evidence="4">Sarcolemma</location>
        <topology evidence="3">Multi-pass membrane protein</topology>
    </subcellularLocation>
    <subcellularLocation>
        <location evidence="4">Cell projection</location>
    </subcellularLocation>
    <text evidence="2 4">Activation of the vasopressin receptor AVPR1A triggers AQP4 phosphorylation at Ser-180 and promotes its internalization from the cell membrane (By similarity). Detected on brain astrocyte processes and astrocyte endfeet close to capillaries (By similarity).</text>
</comment>
<comment type="alternative products">
    <event type="alternative splicing"/>
    <isoform>
        <id>O77750-1</id>
        <name>2</name>
        <name>B</name>
        <sequence type="displayed"/>
    </isoform>
    <isoform>
        <id>O77750-2</id>
        <name>1</name>
        <name>A</name>
        <sequence type="described" ref="VSP_003231"/>
    </isoform>
</comment>
<comment type="tissue specificity">
    <text evidence="6">Detected in brain and lung.</text>
</comment>
<comment type="domain">
    <text evidence="3">Aquaporins contain two tandem repeats each containing three membrane-spanning domains and a pore-forming loop with the signature motif Asn-Pro-Ala (NPA).</text>
</comment>
<comment type="PTM">
    <text evidence="1">Phosphorylation by PKC at Ser-180 reduces conductance by 50%. Phosphorylation by PKG at Ser-111 in response to glutamate increases conductance by 40% (By similarity).</text>
</comment>
<comment type="PTM">
    <text evidence="2">Isoform 2: Palmitoylated on its N-terminal region. Isoform 1: Not palmitoylated.</text>
</comment>
<comment type="similarity">
    <text evidence="9">Belongs to the MIP/aquaporin (TC 1.A.8) family.</text>
</comment>
<sequence length="323" mass="34672">MSDRPAARRWGKCGPLCTRESIMVAFKGVWTQTFWKAVTAEFLAMLIFVLLSLGSTINWGGAEKPLPVDMVLISLCFGLSIATMVQCFGHISGGHINPAVTVAMVCTRRISIAKSVFYIAAQCLGAIIGAGILYLVTPPSVVGGLGVTTVHGNLSAGHGLLVELIITFQLVFTIFASCDSKRTDVTGSIALAIGISVAIGHLFAINYTGASMNPARSFGPAVIMGNWENHWIYWVGPIIGAVLAGGLYEYVFCPDVELKRRFKEAFSKAAQQTKGSYMEVEDNRSQVETDDLILKPGVVHVIDIDRGEEKKGKDPSGEVLSSV</sequence>
<dbReference type="EMBL" id="AB015947">
    <property type="protein sequence ID" value="BAA36505.2"/>
    <property type="molecule type" value="mRNA"/>
</dbReference>
<dbReference type="EMBL" id="AB012950">
    <property type="protein sequence ID" value="BAA33583.1"/>
    <property type="molecule type" value="mRNA"/>
</dbReference>
<dbReference type="EMBL" id="AB028642">
    <property type="protein sequence ID" value="BAA89291.1"/>
    <property type="molecule type" value="mRNA"/>
</dbReference>
<dbReference type="EMBL" id="BC118415">
    <property type="protein sequence ID" value="AAI18416.1"/>
    <property type="molecule type" value="mRNA"/>
</dbReference>
<dbReference type="RefSeq" id="NP_001304721.1">
    <property type="nucleotide sequence ID" value="NM_001317792.1"/>
</dbReference>
<dbReference type="RefSeq" id="NP_001304723.1">
    <molecule id="O77750-2"/>
    <property type="nucleotide sequence ID" value="NM_001317794.2"/>
</dbReference>
<dbReference type="RefSeq" id="NP_851346.1">
    <molecule id="O77750-1"/>
    <property type="nucleotide sequence ID" value="NM_181003.4"/>
</dbReference>
<dbReference type="RefSeq" id="XP_005224121.1">
    <property type="nucleotide sequence ID" value="XM_005224064.3"/>
</dbReference>
<dbReference type="SMR" id="O77750"/>
<dbReference type="FunCoup" id="O77750">
    <property type="interactions" value="375"/>
</dbReference>
<dbReference type="STRING" id="9913.ENSBTAP00000062598"/>
<dbReference type="GlyCosmos" id="O77750">
    <property type="glycosylation" value="2 sites, No reported glycans"/>
</dbReference>
<dbReference type="GlyGen" id="O77750">
    <property type="glycosylation" value="2 sites"/>
</dbReference>
<dbReference type="PaxDb" id="9913-ENSBTAP00000025341"/>
<dbReference type="Ensembl" id="ENSBTAT00000082069.1">
    <molecule id="O77750-1"/>
    <property type="protein sequence ID" value="ENSBTAP00000062598.1"/>
    <property type="gene ID" value="ENSBTAG00000051072.2"/>
</dbReference>
<dbReference type="GeneID" id="281008"/>
<dbReference type="KEGG" id="bta:281008"/>
<dbReference type="CTD" id="361"/>
<dbReference type="VEuPathDB" id="HostDB:ENSBTAG00000051072"/>
<dbReference type="eggNOG" id="KOG0223">
    <property type="taxonomic scope" value="Eukaryota"/>
</dbReference>
<dbReference type="GeneTree" id="ENSGT00940000156037"/>
<dbReference type="HOGENOM" id="CLU_020019_3_3_1"/>
<dbReference type="InParanoid" id="O77750"/>
<dbReference type="OMA" id="MHYEEAN"/>
<dbReference type="OrthoDB" id="3222at2759"/>
<dbReference type="TreeFam" id="TF312940"/>
<dbReference type="Reactome" id="R-BTA-432040">
    <property type="pathway name" value="Vasopressin regulates renal water homeostasis via Aquaporins"/>
</dbReference>
<dbReference type="Reactome" id="R-BTA-432047">
    <property type="pathway name" value="Passive transport by Aquaporins"/>
</dbReference>
<dbReference type="Proteomes" id="UP000009136">
    <property type="component" value="Chromosome 24"/>
</dbReference>
<dbReference type="Bgee" id="ENSBTAG00000051072">
    <property type="expression patterns" value="Expressed in midbrain and 70 other cell types or tissues"/>
</dbReference>
<dbReference type="GO" id="GO:0097450">
    <property type="term" value="C:astrocyte end-foot"/>
    <property type="evidence" value="ECO:0000250"/>
    <property type="project" value="UniProtKB"/>
</dbReference>
<dbReference type="GO" id="GO:0016323">
    <property type="term" value="C:basolateral plasma membrane"/>
    <property type="evidence" value="ECO:0000250"/>
    <property type="project" value="UniProtKB"/>
</dbReference>
<dbReference type="GO" id="GO:0010008">
    <property type="term" value="C:endosome membrane"/>
    <property type="evidence" value="ECO:0007669"/>
    <property type="project" value="UniProtKB-SubCell"/>
</dbReference>
<dbReference type="GO" id="GO:0005576">
    <property type="term" value="C:extracellular region"/>
    <property type="evidence" value="ECO:0007669"/>
    <property type="project" value="GOC"/>
</dbReference>
<dbReference type="GO" id="GO:0005886">
    <property type="term" value="C:plasma membrane"/>
    <property type="evidence" value="ECO:0000250"/>
    <property type="project" value="UniProtKB"/>
</dbReference>
<dbReference type="GO" id="GO:0042383">
    <property type="term" value="C:sarcolemma"/>
    <property type="evidence" value="ECO:0000250"/>
    <property type="project" value="UniProtKB"/>
</dbReference>
<dbReference type="GO" id="GO:0015250">
    <property type="term" value="F:water channel activity"/>
    <property type="evidence" value="ECO:0000250"/>
    <property type="project" value="UniProtKB"/>
</dbReference>
<dbReference type="GO" id="GO:0090660">
    <property type="term" value="P:cerebrospinal fluid circulation"/>
    <property type="evidence" value="ECO:0000250"/>
    <property type="project" value="UniProtKB"/>
</dbReference>
<dbReference type="GO" id="GO:0009992">
    <property type="term" value="P:intracellular water homeostasis"/>
    <property type="evidence" value="ECO:0000250"/>
    <property type="project" value="UniProtKB"/>
</dbReference>
<dbReference type="GO" id="GO:0050891">
    <property type="term" value="P:multicellular organismal-level water homeostasis"/>
    <property type="evidence" value="ECO:0000250"/>
    <property type="project" value="UniProtKB"/>
</dbReference>
<dbReference type="GO" id="GO:0051289">
    <property type="term" value="P:protein homotetramerization"/>
    <property type="evidence" value="ECO:0000250"/>
    <property type="project" value="UniProtKB"/>
</dbReference>
<dbReference type="GO" id="GO:0006833">
    <property type="term" value="P:water transport"/>
    <property type="evidence" value="ECO:0000250"/>
    <property type="project" value="UniProtKB"/>
</dbReference>
<dbReference type="CDD" id="cd00333">
    <property type="entry name" value="MIP"/>
    <property type="match status" value="1"/>
</dbReference>
<dbReference type="FunFam" id="1.20.1080.10:FF:000009">
    <property type="entry name" value="aquaporin-4 isoform X1"/>
    <property type="match status" value="1"/>
</dbReference>
<dbReference type="Gene3D" id="1.20.1080.10">
    <property type="entry name" value="Glycerol uptake facilitator protein"/>
    <property type="match status" value="1"/>
</dbReference>
<dbReference type="InterPro" id="IPR023271">
    <property type="entry name" value="Aquaporin-like"/>
</dbReference>
<dbReference type="InterPro" id="IPR034294">
    <property type="entry name" value="Aquaporin_transptr"/>
</dbReference>
<dbReference type="InterPro" id="IPR000425">
    <property type="entry name" value="MIP"/>
</dbReference>
<dbReference type="InterPro" id="IPR022357">
    <property type="entry name" value="MIP_CS"/>
</dbReference>
<dbReference type="NCBIfam" id="TIGR00861">
    <property type="entry name" value="MIP"/>
    <property type="match status" value="1"/>
</dbReference>
<dbReference type="PANTHER" id="PTHR19139">
    <property type="entry name" value="AQUAPORIN TRANSPORTER"/>
    <property type="match status" value="1"/>
</dbReference>
<dbReference type="PANTHER" id="PTHR19139:SF34">
    <property type="entry name" value="AQUAPORIN-4"/>
    <property type="match status" value="1"/>
</dbReference>
<dbReference type="Pfam" id="PF00230">
    <property type="entry name" value="MIP"/>
    <property type="match status" value="1"/>
</dbReference>
<dbReference type="PRINTS" id="PR02016">
    <property type="entry name" value="AQUAPORIN4"/>
</dbReference>
<dbReference type="PRINTS" id="PR00783">
    <property type="entry name" value="MINTRINSICP"/>
</dbReference>
<dbReference type="SUPFAM" id="SSF81338">
    <property type="entry name" value="Aquaporin-like"/>
    <property type="match status" value="1"/>
</dbReference>
<dbReference type="PROSITE" id="PS00221">
    <property type="entry name" value="MIP"/>
    <property type="match status" value="1"/>
</dbReference>
<evidence type="ECO:0000250" key="1"/>
<evidence type="ECO:0000250" key="2">
    <source>
        <dbReference type="UniProtKB" id="P47863"/>
    </source>
</evidence>
<evidence type="ECO:0000250" key="3">
    <source>
        <dbReference type="UniProtKB" id="P55087"/>
    </source>
</evidence>
<evidence type="ECO:0000250" key="4">
    <source>
        <dbReference type="UniProtKB" id="P55088"/>
    </source>
</evidence>
<evidence type="ECO:0000255" key="5"/>
<evidence type="ECO:0000269" key="6">
    <source>
    </source>
</evidence>
<evidence type="ECO:0000303" key="7">
    <source>
    </source>
</evidence>
<evidence type="ECO:0000303" key="8">
    <source ref="2"/>
</evidence>
<evidence type="ECO:0000305" key="9"/>
<reference key="1">
    <citation type="journal article" date="1999" name="Biochim. Biophys. Acta">
        <title>Molecular cloning of two bovine aquaporin-4 cDNA isoforms and their expression in brain endothelial cells.</title>
        <authorList>
            <person name="Sobue K."/>
            <person name="Yamamoto N."/>
            <person name="Yoneda K."/>
            <person name="Fujita K."/>
            <person name="Miura Y."/>
            <person name="Asai K."/>
            <person name="Tsuda T."/>
            <person name="Katsuya H."/>
            <person name="Kato T."/>
        </authorList>
    </citation>
    <scope>NUCLEOTIDE SEQUENCE [MRNA] (ISOFORMS 1 AND 2)</scope>
    <scope>TISSUE SPECIFICITY</scope>
    <source>
        <strain>Holstein</strain>
        <tissue>Brain</tissue>
    </source>
</reference>
<reference key="2">
    <citation type="submission" date="2006-06" db="EMBL/GenBank/DDBJ databases">
        <authorList>
            <consortium name="NIH - Mammalian Gene Collection (MGC) project"/>
        </authorList>
    </citation>
    <scope>NUCLEOTIDE SEQUENCE [LARGE SCALE MRNA] (ISOFORM 1)</scope>
    <source>
        <strain>Hereford</strain>
        <tissue>Fetal pons</tissue>
    </source>
</reference>
<feature type="chain" id="PRO_0000063946" description="Aquaporin-4">
    <location>
        <begin position="1"/>
        <end position="323"/>
    </location>
</feature>
<feature type="topological domain" description="Cytoplasmic" evidence="9">
    <location>
        <begin position="1"/>
        <end position="36"/>
    </location>
</feature>
<feature type="transmembrane region" description="Helical" evidence="3">
    <location>
        <begin position="37"/>
        <end position="57"/>
    </location>
</feature>
<feature type="topological domain" description="Extracellular" evidence="9">
    <location>
        <begin position="58"/>
        <end position="69"/>
    </location>
</feature>
<feature type="transmembrane region" description="Helical" evidence="3">
    <location>
        <begin position="70"/>
        <end position="89"/>
    </location>
</feature>
<feature type="topological domain" description="Cytoplasmic" evidence="9">
    <location>
        <begin position="90"/>
        <end position="93"/>
    </location>
</feature>
<feature type="intramembrane region" description="Discontinuously helical" evidence="3">
    <location>
        <begin position="94"/>
        <end position="101"/>
    </location>
</feature>
<feature type="topological domain" description="Cytoplasmic" evidence="9">
    <location>
        <begin position="102"/>
        <end position="115"/>
    </location>
</feature>
<feature type="transmembrane region" description="Helical" evidence="3">
    <location>
        <begin position="116"/>
        <end position="136"/>
    </location>
</feature>
<feature type="topological domain" description="Extracellular" evidence="9">
    <location>
        <begin position="137"/>
        <end position="155"/>
    </location>
</feature>
<feature type="transmembrane region" description="Helical" evidence="3">
    <location>
        <begin position="156"/>
        <end position="176"/>
    </location>
</feature>
<feature type="topological domain" description="Cytoplasmic" evidence="9">
    <location>
        <begin position="177"/>
        <end position="184"/>
    </location>
</feature>
<feature type="transmembrane region" description="Helical" evidence="3">
    <location>
        <begin position="185"/>
        <end position="205"/>
    </location>
</feature>
<feature type="topological domain" description="Extracellular" evidence="9">
    <location>
        <begin position="206"/>
        <end position="208"/>
    </location>
</feature>
<feature type="intramembrane region" description="Discontinuously helical" evidence="3">
    <location>
        <begin position="209"/>
        <end position="222"/>
    </location>
</feature>
<feature type="topological domain" description="Extracellular" evidence="9">
    <location>
        <begin position="223"/>
        <end position="231"/>
    </location>
</feature>
<feature type="transmembrane region" description="Helical" evidence="3">
    <location>
        <begin position="232"/>
        <end position="252"/>
    </location>
</feature>
<feature type="topological domain" description="Cytoplasmic" evidence="9">
    <location>
        <begin position="253"/>
        <end position="323"/>
    </location>
</feature>
<feature type="short sequence motif" description="NPA 1" evidence="3">
    <location>
        <begin position="97"/>
        <end position="99"/>
    </location>
</feature>
<feature type="short sequence motif" description="NPA 2" evidence="3">
    <location>
        <begin position="213"/>
        <end position="215"/>
    </location>
</feature>
<feature type="modified residue" description="Phosphoserine; by PKG" evidence="4">
    <location>
        <position position="111"/>
    </location>
</feature>
<feature type="modified residue" description="Phosphoserine; by PKC" evidence="2">
    <location>
        <position position="180"/>
    </location>
</feature>
<feature type="modified residue" description="Phosphoserine" evidence="2">
    <location>
        <position position="276"/>
    </location>
</feature>
<feature type="modified residue" description="Phosphoserine" evidence="4">
    <location>
        <position position="285"/>
    </location>
</feature>
<feature type="modified residue" description="Phosphothreonine" evidence="4">
    <location>
        <position position="289"/>
    </location>
</feature>
<feature type="modified residue" description="Phosphoserine" evidence="2">
    <location>
        <position position="321"/>
    </location>
</feature>
<feature type="lipid moiety-binding region" description="S-palmitoyl cysteine" evidence="2">
    <location>
        <position position="13"/>
    </location>
</feature>
<feature type="lipid moiety-binding region" description="S-palmitoyl cysteine" evidence="2">
    <location>
        <position position="17"/>
    </location>
</feature>
<feature type="glycosylation site" description="N-linked (GlcNAc...) asparagine" evidence="5">
    <location>
        <position position="153"/>
    </location>
</feature>
<feature type="glycosylation site" description="N-linked (GlcNAc...) asparagine" evidence="5">
    <location>
        <position position="206"/>
    </location>
</feature>
<feature type="splice variant" id="VSP_003231" description="In isoform 1." evidence="7 8">
    <location>
        <begin position="1"/>
        <end position="22"/>
    </location>
</feature>
<feature type="sequence conflict" description="In Ref. 1." evidence="9" ref="1">
    <original>R</original>
    <variation>T</variation>
    <location>
        <position position="8"/>
    </location>
</feature>
<gene>
    <name type="primary">AQP4</name>
</gene>
<protein>
    <recommendedName>
        <fullName>Aquaporin-4</fullName>
        <shortName>AQP-4</shortName>
    </recommendedName>
    <alternativeName>
        <fullName>Mercurial-insensitive water channel</fullName>
        <shortName>MIWC</shortName>
    </alternativeName>
    <alternativeName>
        <fullName>WCH4</fullName>
    </alternativeName>
</protein>
<organism>
    <name type="scientific">Bos taurus</name>
    <name type="common">Bovine</name>
    <dbReference type="NCBI Taxonomy" id="9913"/>
    <lineage>
        <taxon>Eukaryota</taxon>
        <taxon>Metazoa</taxon>
        <taxon>Chordata</taxon>
        <taxon>Craniata</taxon>
        <taxon>Vertebrata</taxon>
        <taxon>Euteleostomi</taxon>
        <taxon>Mammalia</taxon>
        <taxon>Eutheria</taxon>
        <taxon>Laurasiatheria</taxon>
        <taxon>Artiodactyla</taxon>
        <taxon>Ruminantia</taxon>
        <taxon>Pecora</taxon>
        <taxon>Bovidae</taxon>
        <taxon>Bovinae</taxon>
        <taxon>Bos</taxon>
    </lineage>
</organism>
<accession>O77750</accession>
<accession>Q17QE1</accession>
<proteinExistence type="evidence at transcript level"/>